<protein>
    <recommendedName>
        <fullName>Cuticle protein 65</fullName>
    </recommendedName>
    <alternativeName>
        <fullName>LM-ACP 65</fullName>
        <shortName>LM-65</shortName>
    </alternativeName>
</protein>
<sequence length="145" mass="13318">GLLGLGYGGYGGYGGYGGYGHGLALAAAPAAIAAPAVVAAPAIAHAPAVAVAPAVAHAPAAVSTVSQVSYGTTHYAPAVAKVAAVAAPVAVAAPAIAAAPAVGLGYGHGLGYGHGVGLGYAAAAPALSLGYGGYGHGLSLGYGHH</sequence>
<evidence type="ECO:0000269" key="1">
    <source>
    </source>
</evidence>
<name>CU65_LOCMI</name>
<proteinExistence type="evidence at protein level"/>
<reference key="1">
    <citation type="journal article" date="1995" name="Insect Biochem. Mol. Biol.">
        <title>Primary structure of proteins from the wing cuticle of the migratory locust, Locusta migratoria.</title>
        <authorList>
            <person name="Krogh T.N."/>
            <person name="Skou L."/>
            <person name="Roepstorff P."/>
            <person name="Andersen S.O."/>
            <person name="Hoejrup P."/>
        </authorList>
    </citation>
    <scope>PROTEIN SEQUENCE</scope>
    <scope>MASS SPECTROMETRY</scope>
    <source>
        <tissue>Wing</tissue>
    </source>
</reference>
<accession>P45585</accession>
<keyword id="KW-0193">Cuticle</keyword>
<keyword id="KW-0903">Direct protein sequencing</keyword>
<keyword id="KW-0677">Repeat</keyword>
<comment type="function">
    <text>Component of the cuticle of migratory locust which contains more than 100 different structural proteins.</text>
</comment>
<comment type="domain">
    <text>The tetrapeptide (A-A-P-[AV]) repeats found throughout the protein are also present in many proteins constituting the protective envelope of other species.</text>
</comment>
<comment type="mass spectrometry" mass="13319.9" method="Electrospray" evidence="1"/>
<organism>
    <name type="scientific">Locusta migratoria</name>
    <name type="common">Migratory locust</name>
    <dbReference type="NCBI Taxonomy" id="7004"/>
    <lineage>
        <taxon>Eukaryota</taxon>
        <taxon>Metazoa</taxon>
        <taxon>Ecdysozoa</taxon>
        <taxon>Arthropoda</taxon>
        <taxon>Hexapoda</taxon>
        <taxon>Insecta</taxon>
        <taxon>Pterygota</taxon>
        <taxon>Neoptera</taxon>
        <taxon>Polyneoptera</taxon>
        <taxon>Orthoptera</taxon>
        <taxon>Caelifera</taxon>
        <taxon>Acrididea</taxon>
        <taxon>Acridomorpha</taxon>
        <taxon>Acridoidea</taxon>
        <taxon>Acrididae</taxon>
        <taxon>Oedipodinae</taxon>
        <taxon>Locusta</taxon>
    </lineage>
</organism>
<dbReference type="GO" id="GO:0042302">
    <property type="term" value="F:structural constituent of cuticle"/>
    <property type="evidence" value="ECO:0007669"/>
    <property type="project" value="UniProtKB-KW"/>
</dbReference>
<feature type="chain" id="PRO_0000196109" description="Cuticle protein 65">
    <location>
        <begin position="1"/>
        <end position="145"/>
    </location>
</feature>
<feature type="repeat" description="1">
    <location>
        <begin position="27"/>
        <end position="30"/>
    </location>
</feature>
<feature type="repeat" description="2">
    <location>
        <begin position="33"/>
        <end position="37"/>
    </location>
</feature>
<feature type="repeat" description="3">
    <location>
        <begin position="39"/>
        <end position="42"/>
    </location>
</feature>
<feature type="repeat" description="4">
    <location>
        <begin position="86"/>
        <end position="89"/>
    </location>
</feature>
<feature type="repeat" description="5">
    <location>
        <begin position="92"/>
        <end position="95"/>
    </location>
</feature>
<feature type="repeat" description="6">
    <location>
        <begin position="98"/>
        <end position="101"/>
    </location>
</feature>
<feature type="repeat" description="7">
    <location>
        <begin position="123"/>
        <end position="126"/>
    </location>
</feature>